<organism>
    <name type="scientific">Caulobacter sp. (strain K31)</name>
    <dbReference type="NCBI Taxonomy" id="366602"/>
    <lineage>
        <taxon>Bacteria</taxon>
        <taxon>Pseudomonadati</taxon>
        <taxon>Pseudomonadota</taxon>
        <taxon>Alphaproteobacteria</taxon>
        <taxon>Caulobacterales</taxon>
        <taxon>Caulobacteraceae</taxon>
        <taxon>Caulobacter</taxon>
    </lineage>
</organism>
<evidence type="ECO:0000255" key="1">
    <source>
        <dbReference type="HAMAP-Rule" id="MF_00006"/>
    </source>
</evidence>
<comment type="catalytic activity">
    <reaction evidence="1">
        <text>2-(N(omega)-L-arginino)succinate = fumarate + L-arginine</text>
        <dbReference type="Rhea" id="RHEA:24020"/>
        <dbReference type="ChEBI" id="CHEBI:29806"/>
        <dbReference type="ChEBI" id="CHEBI:32682"/>
        <dbReference type="ChEBI" id="CHEBI:57472"/>
        <dbReference type="EC" id="4.3.2.1"/>
    </reaction>
</comment>
<comment type="pathway">
    <text evidence="1">Amino-acid biosynthesis; L-arginine biosynthesis; L-arginine from L-ornithine and carbamoyl phosphate: step 3/3.</text>
</comment>
<comment type="subcellular location">
    <subcellularLocation>
        <location evidence="1">Cytoplasm</location>
    </subcellularLocation>
</comment>
<comment type="similarity">
    <text evidence="1">Belongs to the lyase 1 family. Argininosuccinate lyase subfamily.</text>
</comment>
<dbReference type="EC" id="4.3.2.1" evidence="1"/>
<dbReference type="EMBL" id="CP000927">
    <property type="protein sequence ID" value="ABZ72338.1"/>
    <property type="molecule type" value="Genomic_DNA"/>
</dbReference>
<dbReference type="SMR" id="B0T2T7"/>
<dbReference type="STRING" id="366602.Caul_3211"/>
<dbReference type="KEGG" id="cak:Caul_3211"/>
<dbReference type="eggNOG" id="COG0165">
    <property type="taxonomic scope" value="Bacteria"/>
</dbReference>
<dbReference type="HOGENOM" id="CLU_027272_2_3_5"/>
<dbReference type="UniPathway" id="UPA00068">
    <property type="reaction ID" value="UER00114"/>
</dbReference>
<dbReference type="GO" id="GO:0005829">
    <property type="term" value="C:cytosol"/>
    <property type="evidence" value="ECO:0007669"/>
    <property type="project" value="TreeGrafter"/>
</dbReference>
<dbReference type="GO" id="GO:0004056">
    <property type="term" value="F:argininosuccinate lyase activity"/>
    <property type="evidence" value="ECO:0007669"/>
    <property type="project" value="UniProtKB-UniRule"/>
</dbReference>
<dbReference type="GO" id="GO:0042450">
    <property type="term" value="P:arginine biosynthetic process via ornithine"/>
    <property type="evidence" value="ECO:0007669"/>
    <property type="project" value="InterPro"/>
</dbReference>
<dbReference type="GO" id="GO:0006526">
    <property type="term" value="P:L-arginine biosynthetic process"/>
    <property type="evidence" value="ECO:0007669"/>
    <property type="project" value="UniProtKB-UniRule"/>
</dbReference>
<dbReference type="CDD" id="cd01359">
    <property type="entry name" value="Argininosuccinate_lyase"/>
    <property type="match status" value="1"/>
</dbReference>
<dbReference type="FunFam" id="1.10.275.10:FF:000002">
    <property type="entry name" value="Argininosuccinate lyase"/>
    <property type="match status" value="1"/>
</dbReference>
<dbReference type="FunFam" id="1.10.40.30:FF:000001">
    <property type="entry name" value="Argininosuccinate lyase"/>
    <property type="match status" value="1"/>
</dbReference>
<dbReference type="FunFam" id="1.20.200.10:FF:000015">
    <property type="entry name" value="argininosuccinate lyase isoform X2"/>
    <property type="match status" value="1"/>
</dbReference>
<dbReference type="Gene3D" id="1.10.40.30">
    <property type="entry name" value="Fumarase/aspartase (C-terminal domain)"/>
    <property type="match status" value="1"/>
</dbReference>
<dbReference type="Gene3D" id="1.20.200.10">
    <property type="entry name" value="Fumarase/aspartase (Central domain)"/>
    <property type="match status" value="1"/>
</dbReference>
<dbReference type="Gene3D" id="1.10.275.10">
    <property type="entry name" value="Fumarase/aspartase (N-terminal domain)"/>
    <property type="match status" value="1"/>
</dbReference>
<dbReference type="HAMAP" id="MF_00006">
    <property type="entry name" value="Arg_succ_lyase"/>
    <property type="match status" value="1"/>
</dbReference>
<dbReference type="InterPro" id="IPR029419">
    <property type="entry name" value="Arg_succ_lyase_C"/>
</dbReference>
<dbReference type="InterPro" id="IPR009049">
    <property type="entry name" value="Argininosuccinate_lyase"/>
</dbReference>
<dbReference type="InterPro" id="IPR024083">
    <property type="entry name" value="Fumarase/histidase_N"/>
</dbReference>
<dbReference type="InterPro" id="IPR020557">
    <property type="entry name" value="Fumarate_lyase_CS"/>
</dbReference>
<dbReference type="InterPro" id="IPR000362">
    <property type="entry name" value="Fumarate_lyase_fam"/>
</dbReference>
<dbReference type="InterPro" id="IPR022761">
    <property type="entry name" value="Fumarate_lyase_N"/>
</dbReference>
<dbReference type="InterPro" id="IPR008948">
    <property type="entry name" value="L-Aspartase-like"/>
</dbReference>
<dbReference type="NCBIfam" id="TIGR00838">
    <property type="entry name" value="argH"/>
    <property type="match status" value="1"/>
</dbReference>
<dbReference type="PANTHER" id="PTHR43814">
    <property type="entry name" value="ARGININOSUCCINATE LYASE"/>
    <property type="match status" value="1"/>
</dbReference>
<dbReference type="PANTHER" id="PTHR43814:SF1">
    <property type="entry name" value="ARGININOSUCCINATE LYASE"/>
    <property type="match status" value="1"/>
</dbReference>
<dbReference type="Pfam" id="PF14698">
    <property type="entry name" value="ASL_C2"/>
    <property type="match status" value="1"/>
</dbReference>
<dbReference type="Pfam" id="PF00206">
    <property type="entry name" value="Lyase_1"/>
    <property type="match status" value="1"/>
</dbReference>
<dbReference type="PRINTS" id="PR00145">
    <property type="entry name" value="ARGSUCLYASE"/>
</dbReference>
<dbReference type="PRINTS" id="PR00149">
    <property type="entry name" value="FUMRATELYASE"/>
</dbReference>
<dbReference type="SUPFAM" id="SSF48557">
    <property type="entry name" value="L-aspartase-like"/>
    <property type="match status" value="1"/>
</dbReference>
<dbReference type="PROSITE" id="PS00163">
    <property type="entry name" value="FUMARATE_LYASES"/>
    <property type="match status" value="1"/>
</dbReference>
<sequence>MWGGRFSAKPAELMQAINVSIGFDKRLWAQDLAGSRAHARMLISQGVIARDDGEEILKGLDAIEGEIVAGAFPFRDEYEDIHMNIEARLRELIGPTAGRLHTARSRNDQVAVDFRLWVREACDRSAAQLEALQKALVAQAEQYADALMPGFTHLQPAQPVTFGHHLMAYVEMFGRDASRFRDARVRMNECPLGAAALAGSPFPIDRHATAASLGFDRPTANSLDSVSARDFALEALSAASICATHLSRLAEEIVLWTTPMFGFVKLTDAFTTGSSIMPQKKNPDAAELVRAKVGRILGSLTTLTVVMKGLPLAYSKDMQEDKVPTFEAFDALELSLLAMAGMVSDLTPNTEKMAAAAGAGFSTATDLADWLVRELNMPFRDAHHVTGSAVKAAETLGVDLAELSLADLRAIEPRITSDIYTVLTPAASAASRISYGGTAPAQVRAQIARWKELLG</sequence>
<keyword id="KW-0028">Amino-acid biosynthesis</keyword>
<keyword id="KW-0055">Arginine biosynthesis</keyword>
<keyword id="KW-0963">Cytoplasm</keyword>
<keyword id="KW-0456">Lyase</keyword>
<gene>
    <name evidence="1" type="primary">argH</name>
    <name type="ordered locus">Caul_3211</name>
</gene>
<protein>
    <recommendedName>
        <fullName evidence="1">Argininosuccinate lyase</fullName>
        <shortName evidence="1">ASAL</shortName>
        <ecNumber evidence="1">4.3.2.1</ecNumber>
    </recommendedName>
    <alternativeName>
        <fullName evidence="1">Arginosuccinase</fullName>
    </alternativeName>
</protein>
<reference key="1">
    <citation type="submission" date="2008-01" db="EMBL/GenBank/DDBJ databases">
        <title>Complete sequence of chromosome of Caulobacter sp. K31.</title>
        <authorList>
            <consortium name="US DOE Joint Genome Institute"/>
            <person name="Copeland A."/>
            <person name="Lucas S."/>
            <person name="Lapidus A."/>
            <person name="Barry K."/>
            <person name="Glavina del Rio T."/>
            <person name="Dalin E."/>
            <person name="Tice H."/>
            <person name="Pitluck S."/>
            <person name="Bruce D."/>
            <person name="Goodwin L."/>
            <person name="Thompson L.S."/>
            <person name="Brettin T."/>
            <person name="Detter J.C."/>
            <person name="Han C."/>
            <person name="Schmutz J."/>
            <person name="Larimer F."/>
            <person name="Land M."/>
            <person name="Hauser L."/>
            <person name="Kyrpides N."/>
            <person name="Kim E."/>
            <person name="Stephens C."/>
            <person name="Richardson P."/>
        </authorList>
    </citation>
    <scope>NUCLEOTIDE SEQUENCE [LARGE SCALE GENOMIC DNA]</scope>
    <source>
        <strain>K31</strain>
    </source>
</reference>
<name>ARLY_CAUSK</name>
<proteinExistence type="inferred from homology"/>
<feature type="chain" id="PRO_1000073840" description="Argininosuccinate lyase">
    <location>
        <begin position="1"/>
        <end position="455"/>
    </location>
</feature>
<accession>B0T2T7</accession>